<reference key="1">
    <citation type="journal article" date="1993" name="Mol. Biol. Evol.">
        <title>Sequence relationship of retrotransposable elements R1 and R2 within and between divergent insect species.</title>
        <authorList>
            <person name="Burke W.D."/>
            <person name="Eickbush D.G."/>
            <person name="Xiong Y."/>
            <person name="Jakubczak J.L."/>
            <person name="Eickbush T.H."/>
        </authorList>
    </citation>
    <scope>NUCLEOTIDE SEQUENCE [GENOMIC DNA]</scope>
</reference>
<reference key="2">
    <citation type="journal article" date="1991" name="Proc. Natl. Acad. Sci. U.S.A.">
        <title>Retrotransposable elements R1 and R2 interrupt the rRNA genes of most insects.</title>
        <authorList>
            <person name="Jakubczak J.L."/>
            <person name="Burke W.D."/>
            <person name="Eickbush T.H."/>
        </authorList>
    </citation>
    <scope>NUCLEOTIDE SEQUENCE [GENOMIC DNA] OF 206-223</scope>
</reference>
<name>PO21_POPJA</name>
<sequence>QPSVFNLVKWLANLHKAPLKPDQKLAMLKRHIIPKLHYGLQTPNITGQILSEADRLIRKAVRRVLHLSVHTGSQFLYAAIRDGGLGIPQLRYHIPDVLRRRLENLSRDDSLAKAMLASAGPAAEFRQRVSVLAARGPPQAYWREQVATRPFSRGLEDCAHDAASREWLLRTPAGWTGRDFVRAAQLRTGNLPTMGLPYIPRERRRCRAGCERVESVSHILQACPVTHFERIKRHDEIVRKIAAHCRKRGWTTEVEPRIYHQDGQLFIPDLAVHLAAESILVCDVQVCWEGHRTLAKSWQNKKLVYDHPRFRKAAARRWAGSRIAISPLVLGPVGVWPRSNAETAALLQLPKTIKGSCIQSCLKWGSSIHKIFMASVWKHGPRPAHHHQPRPPEGQATANTGTLQSGRPALSHSRKKRKRQLTPTQRAPSLASPPAGATPRQLIEY</sequence>
<feature type="chain" id="PRO_0000058498" description="Retrovirus-related Pol polyprotein from type-1 retrotransposable element R2">
    <location>
        <begin position="1" status="less than"/>
        <end position="445"/>
    </location>
</feature>
<feature type="domain" description="Reverse transcriptase">
    <location>
        <begin position="1" status="less than"/>
        <end position="114"/>
    </location>
</feature>
<feature type="region of interest" description="Nucleic acid-binding endonuclease">
    <location>
        <begin position="115"/>
        <end position="445"/>
    </location>
</feature>
<feature type="region of interest" description="Disordered" evidence="1">
    <location>
        <begin position="380"/>
        <end position="445"/>
    </location>
</feature>
<feature type="compositionally biased region" description="Basic residues" evidence="1">
    <location>
        <begin position="380"/>
        <end position="389"/>
    </location>
</feature>
<feature type="compositionally biased region" description="Polar residues" evidence="1">
    <location>
        <begin position="396"/>
        <end position="405"/>
    </location>
</feature>
<feature type="non-terminal residue">
    <location>
        <position position="1"/>
    </location>
</feature>
<protein>
    <recommendedName>
        <fullName>Retrovirus-related Pol polyprotein from type-1 retrotransposable element R2</fullName>
    </recommendedName>
    <alternativeName>
        <fullName>Retrovirus-related Pol polyprotein from type I retrotransposable element R2</fullName>
    </alternativeName>
    <domain>
        <recommendedName>
            <fullName>Reverse transcriptase</fullName>
            <ecNumber>2.7.7.49</ecNumber>
        </recommendedName>
    </domain>
    <domain>
        <recommendedName>
            <fullName>Endonuclease</fullName>
        </recommendedName>
    </domain>
</protein>
<evidence type="ECO:0000256" key="1">
    <source>
        <dbReference type="SAM" id="MobiDB-lite"/>
    </source>
</evidence>
<proteinExistence type="predicted"/>
<dbReference type="EC" id="2.7.7.49"/>
<dbReference type="EMBL" id="L00946">
    <property type="protein sequence ID" value="AAA29784.1"/>
    <property type="molecule type" value="Genomic_DNA"/>
</dbReference>
<dbReference type="PIR" id="C47757">
    <property type="entry name" value="C47757"/>
</dbReference>
<dbReference type="SMR" id="Q03273"/>
<dbReference type="GO" id="GO:0004519">
    <property type="term" value="F:endonuclease activity"/>
    <property type="evidence" value="ECO:0007669"/>
    <property type="project" value="UniProtKB-KW"/>
</dbReference>
<dbReference type="GO" id="GO:0003964">
    <property type="term" value="F:RNA-directed DNA polymerase activity"/>
    <property type="evidence" value="ECO:0007669"/>
    <property type="project" value="UniProtKB-KW"/>
</dbReference>
<dbReference type="PANTHER" id="PTHR37557">
    <property type="entry name" value="115 KDA PROTEIN IN TYPE-1 RETROTRANSPOSABLE ELEMENT R1DM-LIKE PROTEIN-RELATED-RELATED"/>
    <property type="match status" value="1"/>
</dbReference>
<dbReference type="PANTHER" id="PTHR37557:SF4">
    <property type="entry name" value="CCHC-TYPE DOMAIN-CONTAINING PROTEIN"/>
    <property type="match status" value="1"/>
</dbReference>
<keyword id="KW-0255">Endonuclease</keyword>
<keyword id="KW-0378">Hydrolase</keyword>
<keyword id="KW-0540">Nuclease</keyword>
<keyword id="KW-0548">Nucleotidyltransferase</keyword>
<keyword id="KW-0695">RNA-directed DNA polymerase</keyword>
<keyword id="KW-0808">Transferase</keyword>
<keyword id="KW-0814">Transposable element</keyword>
<organism>
    <name type="scientific">Popillia japonica</name>
    <name type="common">Japanese beetle</name>
    <dbReference type="NCBI Taxonomy" id="7064"/>
    <lineage>
        <taxon>Eukaryota</taxon>
        <taxon>Metazoa</taxon>
        <taxon>Ecdysozoa</taxon>
        <taxon>Arthropoda</taxon>
        <taxon>Hexapoda</taxon>
        <taxon>Insecta</taxon>
        <taxon>Pterygota</taxon>
        <taxon>Neoptera</taxon>
        <taxon>Endopterygota</taxon>
        <taxon>Coleoptera</taxon>
        <taxon>Polyphaga</taxon>
        <taxon>Scarabaeiformia</taxon>
        <taxon>Scarabaeidae</taxon>
        <taxon>Rutelinae</taxon>
        <taxon>Popillia</taxon>
    </lineage>
</organism>
<accession>Q03273</accession>
<comment type="catalytic activity">
    <reaction>
        <text>DNA(n) + a 2'-deoxyribonucleoside 5'-triphosphate = DNA(n+1) + diphosphate</text>
        <dbReference type="Rhea" id="RHEA:22508"/>
        <dbReference type="Rhea" id="RHEA-COMP:17339"/>
        <dbReference type="Rhea" id="RHEA-COMP:17340"/>
        <dbReference type="ChEBI" id="CHEBI:33019"/>
        <dbReference type="ChEBI" id="CHEBI:61560"/>
        <dbReference type="ChEBI" id="CHEBI:173112"/>
        <dbReference type="EC" id="2.7.7.49"/>
    </reaction>
</comment>